<protein>
    <recommendedName>
        <fullName evidence="2">Large ribosomal subunit protein uL11</fullName>
    </recommendedName>
    <alternativeName>
        <fullName>60S ribosomal protein L12</fullName>
    </alternativeName>
</protein>
<organism>
    <name type="scientific">Caenorhabditis briggsae</name>
    <dbReference type="NCBI Taxonomy" id="6238"/>
    <lineage>
        <taxon>Eukaryota</taxon>
        <taxon>Metazoa</taxon>
        <taxon>Ecdysozoa</taxon>
        <taxon>Nematoda</taxon>
        <taxon>Chromadorea</taxon>
        <taxon>Rhabditida</taxon>
        <taxon>Rhabditina</taxon>
        <taxon>Rhabditomorpha</taxon>
        <taxon>Rhabditoidea</taxon>
        <taxon>Rhabditidae</taxon>
        <taxon>Peloderinae</taxon>
        <taxon>Caenorhabditis</taxon>
    </lineage>
</organism>
<dbReference type="EMBL" id="AF246691">
    <property type="protein sequence ID" value="AAF65224.1"/>
    <property type="molecule type" value="Genomic_DNA"/>
</dbReference>
<dbReference type="EMBL" id="HE601298">
    <property type="protein sequence ID" value="CAP22831.1"/>
    <property type="molecule type" value="Genomic_DNA"/>
</dbReference>
<dbReference type="SMR" id="P61865"/>
<dbReference type="FunCoup" id="P61865">
    <property type="interactions" value="1447"/>
</dbReference>
<dbReference type="STRING" id="6238.P61865"/>
<dbReference type="EnsemblMetazoa" id="CBG01806.1">
    <property type="protein sequence ID" value="CBG01806.1"/>
    <property type="gene ID" value="WBGene00024992"/>
</dbReference>
<dbReference type="KEGG" id="cbr:CBG_01806"/>
<dbReference type="CTD" id="8576231"/>
<dbReference type="WormBase" id="CBG01806">
    <property type="protein sequence ID" value="CBP00418"/>
    <property type="gene ID" value="WBGene00024992"/>
    <property type="gene designation" value="Cbr-rpl-12"/>
</dbReference>
<dbReference type="eggNOG" id="KOG0886">
    <property type="taxonomic scope" value="Eukaryota"/>
</dbReference>
<dbReference type="HOGENOM" id="CLU_074237_5_0_1"/>
<dbReference type="InParanoid" id="P61865"/>
<dbReference type="OMA" id="VILEESC"/>
<dbReference type="OrthoDB" id="1478556at2759"/>
<dbReference type="Proteomes" id="UP000008549">
    <property type="component" value="Unassembled WGS sequence"/>
</dbReference>
<dbReference type="GO" id="GO:0022625">
    <property type="term" value="C:cytosolic large ribosomal subunit"/>
    <property type="evidence" value="ECO:0000318"/>
    <property type="project" value="GO_Central"/>
</dbReference>
<dbReference type="GO" id="GO:0070180">
    <property type="term" value="F:large ribosomal subunit rRNA binding"/>
    <property type="evidence" value="ECO:0000318"/>
    <property type="project" value="GO_Central"/>
</dbReference>
<dbReference type="GO" id="GO:0003735">
    <property type="term" value="F:structural constituent of ribosome"/>
    <property type="evidence" value="ECO:0000318"/>
    <property type="project" value="GO_Central"/>
</dbReference>
<dbReference type="GO" id="GO:0000381">
    <property type="term" value="P:regulation of alternative mRNA splicing, via spliceosome"/>
    <property type="evidence" value="ECO:0007669"/>
    <property type="project" value="EnsemblMetazoa"/>
</dbReference>
<dbReference type="GO" id="GO:0006412">
    <property type="term" value="P:translation"/>
    <property type="evidence" value="ECO:0000318"/>
    <property type="project" value="GO_Central"/>
</dbReference>
<dbReference type="CDD" id="cd00349">
    <property type="entry name" value="Ribosomal_L11"/>
    <property type="match status" value="1"/>
</dbReference>
<dbReference type="FunFam" id="1.10.10.250:FF:000002">
    <property type="entry name" value="60S ribosomal protein L12"/>
    <property type="match status" value="1"/>
</dbReference>
<dbReference type="FunFam" id="3.30.1550.10:FF:000002">
    <property type="entry name" value="60S ribosomal protein L12"/>
    <property type="match status" value="1"/>
</dbReference>
<dbReference type="Gene3D" id="1.10.10.250">
    <property type="entry name" value="Ribosomal protein L11, C-terminal domain"/>
    <property type="match status" value="1"/>
</dbReference>
<dbReference type="Gene3D" id="3.30.1550.10">
    <property type="entry name" value="Ribosomal protein L11/L12, N-terminal domain"/>
    <property type="match status" value="1"/>
</dbReference>
<dbReference type="HAMAP" id="MF_00736">
    <property type="entry name" value="Ribosomal_uL11"/>
    <property type="match status" value="1"/>
</dbReference>
<dbReference type="InterPro" id="IPR000911">
    <property type="entry name" value="Ribosomal_uL11"/>
</dbReference>
<dbReference type="InterPro" id="IPR020783">
    <property type="entry name" value="Ribosomal_uL11_C"/>
</dbReference>
<dbReference type="InterPro" id="IPR036769">
    <property type="entry name" value="Ribosomal_uL11_C_sf"/>
</dbReference>
<dbReference type="InterPro" id="IPR020785">
    <property type="entry name" value="Ribosomal_uL11_CS"/>
</dbReference>
<dbReference type="InterPro" id="IPR020784">
    <property type="entry name" value="Ribosomal_uL11_N"/>
</dbReference>
<dbReference type="InterPro" id="IPR036796">
    <property type="entry name" value="Ribosomal_uL11_N_sf"/>
</dbReference>
<dbReference type="PANTHER" id="PTHR11661">
    <property type="entry name" value="60S RIBOSOMAL PROTEIN L12"/>
    <property type="match status" value="1"/>
</dbReference>
<dbReference type="PANTHER" id="PTHR11661:SF2">
    <property type="entry name" value="LARGE RIBOSOMAL SUBUNIT PROTEIN UL11"/>
    <property type="match status" value="1"/>
</dbReference>
<dbReference type="Pfam" id="PF00298">
    <property type="entry name" value="Ribosomal_L11"/>
    <property type="match status" value="1"/>
</dbReference>
<dbReference type="Pfam" id="PF03946">
    <property type="entry name" value="Ribosomal_L11_N"/>
    <property type="match status" value="1"/>
</dbReference>
<dbReference type="SMART" id="SM00649">
    <property type="entry name" value="RL11"/>
    <property type="match status" value="1"/>
</dbReference>
<dbReference type="SUPFAM" id="SSF54747">
    <property type="entry name" value="Ribosomal L11/L12e N-terminal domain"/>
    <property type="match status" value="1"/>
</dbReference>
<dbReference type="SUPFAM" id="SSF46906">
    <property type="entry name" value="Ribosomal protein L11, C-terminal domain"/>
    <property type="match status" value="1"/>
</dbReference>
<dbReference type="PROSITE" id="PS00359">
    <property type="entry name" value="RIBOSOMAL_L11"/>
    <property type="match status" value="1"/>
</dbReference>
<sequence>MPPKFDPTEIKIVYLRCVGGEVGATSALAPKVGPLGLSPKKIGEDIAKATQDWKGLKVTCKLTIQNRVAKIDVVPSAASLIVKELKEPPRDRKKVKNVKHNGDLTVDTIIKIARIMRPRSMAKKLEGTVKEILGTAQSVGCTIDGQHPHDIIESIANGEIEIPAQ</sequence>
<accession>P61865</accession>
<accession>A8WQS3</accession>
<accession>O62290</accession>
<proteinExistence type="inferred from homology"/>
<keyword id="KW-1185">Reference proteome</keyword>
<keyword id="KW-0687">Ribonucleoprotein</keyword>
<keyword id="KW-0689">Ribosomal protein</keyword>
<keyword id="KW-0694">RNA-binding</keyword>
<gene>
    <name type="primary">rpl-12</name>
    <name type="ORF">CBG01806</name>
</gene>
<name>RL12_CAEBR</name>
<feature type="chain" id="PRO_0000104459" description="Large ribosomal subunit protein uL11">
    <location>
        <begin position="1"/>
        <end position="165"/>
    </location>
</feature>
<evidence type="ECO:0000250" key="1"/>
<evidence type="ECO:0000305" key="2"/>
<reference key="1">
    <citation type="journal article" date="2000" name="Genes Dev.">
        <title>Unproductively spliced ribosomal protein mRNAs are natural targets of mRNA surveillance in C. elegans.</title>
        <authorList>
            <person name="Mitrovich Q.M."/>
            <person name="Anderson P."/>
        </authorList>
    </citation>
    <scope>NUCLEOTIDE SEQUENCE [GENOMIC DNA]</scope>
</reference>
<reference key="2">
    <citation type="journal article" date="2003" name="PLoS Biol.">
        <title>The genome sequence of Caenorhabditis briggsae: a platform for comparative genomics.</title>
        <authorList>
            <person name="Stein L.D."/>
            <person name="Bao Z."/>
            <person name="Blasiar D."/>
            <person name="Blumenthal T."/>
            <person name="Brent M.R."/>
            <person name="Chen N."/>
            <person name="Chinwalla A."/>
            <person name="Clarke L."/>
            <person name="Clee C."/>
            <person name="Coghlan A."/>
            <person name="Coulson A."/>
            <person name="D'Eustachio P."/>
            <person name="Fitch D.H.A."/>
            <person name="Fulton L.A."/>
            <person name="Fulton R.E."/>
            <person name="Griffiths-Jones S."/>
            <person name="Harris T.W."/>
            <person name="Hillier L.W."/>
            <person name="Kamath R."/>
            <person name="Kuwabara P.E."/>
            <person name="Mardis E.R."/>
            <person name="Marra M.A."/>
            <person name="Miner T.L."/>
            <person name="Minx P."/>
            <person name="Mullikin J.C."/>
            <person name="Plumb R.W."/>
            <person name="Rogers J."/>
            <person name="Schein J.E."/>
            <person name="Sohrmann M."/>
            <person name="Spieth J."/>
            <person name="Stajich J.E."/>
            <person name="Wei C."/>
            <person name="Willey D."/>
            <person name="Wilson R.K."/>
            <person name="Durbin R.M."/>
            <person name="Waterston R.H."/>
        </authorList>
    </citation>
    <scope>NUCLEOTIDE SEQUENCE [LARGE SCALE GENOMIC DNA]</scope>
    <source>
        <strain>AF16</strain>
    </source>
</reference>
<comment type="function">
    <text evidence="1">Binds directly to 26S ribosomal RNA.</text>
</comment>
<comment type="similarity">
    <text evidence="2">Belongs to the universal ribosomal protein uL11 family.</text>
</comment>